<name>PYRR_STAAS</name>
<reference key="1">
    <citation type="journal article" date="2004" name="Proc. Natl. Acad. Sci. U.S.A.">
        <title>Complete genomes of two clinical Staphylococcus aureus strains: evidence for the rapid evolution of virulence and drug resistance.</title>
        <authorList>
            <person name="Holden M.T.G."/>
            <person name="Feil E.J."/>
            <person name="Lindsay J.A."/>
            <person name="Peacock S.J."/>
            <person name="Day N.P.J."/>
            <person name="Enright M.C."/>
            <person name="Foster T.J."/>
            <person name="Moore C.E."/>
            <person name="Hurst L."/>
            <person name="Atkin R."/>
            <person name="Barron A."/>
            <person name="Bason N."/>
            <person name="Bentley S.D."/>
            <person name="Chillingworth C."/>
            <person name="Chillingworth T."/>
            <person name="Churcher C."/>
            <person name="Clark L."/>
            <person name="Corton C."/>
            <person name="Cronin A."/>
            <person name="Doggett J."/>
            <person name="Dowd L."/>
            <person name="Feltwell T."/>
            <person name="Hance Z."/>
            <person name="Harris B."/>
            <person name="Hauser H."/>
            <person name="Holroyd S."/>
            <person name="Jagels K."/>
            <person name="James K.D."/>
            <person name="Lennard N."/>
            <person name="Line A."/>
            <person name="Mayes R."/>
            <person name="Moule S."/>
            <person name="Mungall K."/>
            <person name="Ormond D."/>
            <person name="Quail M.A."/>
            <person name="Rabbinowitsch E."/>
            <person name="Rutherford K.M."/>
            <person name="Sanders M."/>
            <person name="Sharp S."/>
            <person name="Simmonds M."/>
            <person name="Stevens K."/>
            <person name="Whitehead S."/>
            <person name="Barrell B.G."/>
            <person name="Spratt B.G."/>
            <person name="Parkhill J."/>
        </authorList>
    </citation>
    <scope>NUCLEOTIDE SEQUENCE [LARGE SCALE GENOMIC DNA]</scope>
    <source>
        <strain>MSSA476</strain>
    </source>
</reference>
<proteinExistence type="inferred from homology"/>
<feature type="chain" id="PRO_0000183057" description="Bifunctional protein PyrR">
    <location>
        <begin position="1"/>
        <end position="175"/>
    </location>
</feature>
<feature type="short sequence motif" description="PRPP-binding" evidence="2">
    <location>
        <begin position="98"/>
        <end position="110"/>
    </location>
</feature>
<feature type="binding site" evidence="1">
    <location>
        <begin position="40"/>
        <end position="41"/>
    </location>
    <ligand>
        <name>substrate</name>
    </ligand>
</feature>
<feature type="binding site" evidence="1">
    <location>
        <begin position="102"/>
        <end position="110"/>
    </location>
    <ligand>
        <name>substrate</name>
    </ligand>
</feature>
<feature type="binding site" evidence="1">
    <location>
        <position position="135"/>
    </location>
    <ligand>
        <name>substrate</name>
    </ligand>
</feature>
<feature type="binding site" evidence="1">
    <location>
        <position position="159"/>
    </location>
    <ligand>
        <name>substrate</name>
    </ligand>
</feature>
<sequence length="175" mass="19855">MSERIIMDDAAIQRTVTRIAHEILEYNKGTDNLILLGIKTRGEYLANRIQDKIHQIEQQRIPTGTIDITYFRDDIEHMSSLTTKDAIDIDTDITDKVVIIIDDVLYTGRTVRASLDAILLNARPIKIGLAALVDRGHRELPIRADFVGKNIPTSKEETVSVYLEEMDQRNAVIIK</sequence>
<dbReference type="EC" id="2.4.2.9" evidence="2"/>
<dbReference type="EMBL" id="BX571857">
    <property type="protein sequence ID" value="CAG42909.1"/>
    <property type="molecule type" value="Genomic_DNA"/>
</dbReference>
<dbReference type="RefSeq" id="WP_000003870.1">
    <property type="nucleotide sequence ID" value="NC_002953.3"/>
</dbReference>
<dbReference type="SMR" id="Q6GA15"/>
<dbReference type="KEGG" id="sas:SAS1132"/>
<dbReference type="HOGENOM" id="CLU_094234_2_1_9"/>
<dbReference type="GO" id="GO:0003723">
    <property type="term" value="F:RNA binding"/>
    <property type="evidence" value="ECO:0007669"/>
    <property type="project" value="UniProtKB-UniRule"/>
</dbReference>
<dbReference type="GO" id="GO:0004845">
    <property type="term" value="F:uracil phosphoribosyltransferase activity"/>
    <property type="evidence" value="ECO:0007669"/>
    <property type="project" value="UniProtKB-UniRule"/>
</dbReference>
<dbReference type="GO" id="GO:0006353">
    <property type="term" value="P:DNA-templated transcription termination"/>
    <property type="evidence" value="ECO:0007669"/>
    <property type="project" value="UniProtKB-UniRule"/>
</dbReference>
<dbReference type="CDD" id="cd06223">
    <property type="entry name" value="PRTases_typeI"/>
    <property type="match status" value="1"/>
</dbReference>
<dbReference type="FunFam" id="3.40.50.2020:FF:000020">
    <property type="entry name" value="Bifunctional protein PyrR"/>
    <property type="match status" value="1"/>
</dbReference>
<dbReference type="Gene3D" id="3.40.50.2020">
    <property type="match status" value="1"/>
</dbReference>
<dbReference type="HAMAP" id="MF_01219">
    <property type="entry name" value="PyrR"/>
    <property type="match status" value="1"/>
</dbReference>
<dbReference type="InterPro" id="IPR000836">
    <property type="entry name" value="PRibTrfase_dom"/>
</dbReference>
<dbReference type="InterPro" id="IPR029057">
    <property type="entry name" value="PRTase-like"/>
</dbReference>
<dbReference type="InterPro" id="IPR023050">
    <property type="entry name" value="PyrR"/>
</dbReference>
<dbReference type="InterPro" id="IPR050137">
    <property type="entry name" value="PyrR_bifunctional"/>
</dbReference>
<dbReference type="NCBIfam" id="NF003546">
    <property type="entry name" value="PRK05205.1-2"/>
    <property type="match status" value="1"/>
</dbReference>
<dbReference type="NCBIfam" id="NF003548">
    <property type="entry name" value="PRK05205.1-4"/>
    <property type="match status" value="1"/>
</dbReference>
<dbReference type="NCBIfam" id="NF003549">
    <property type="entry name" value="PRK05205.1-5"/>
    <property type="match status" value="1"/>
</dbReference>
<dbReference type="PANTHER" id="PTHR11608">
    <property type="entry name" value="BIFUNCTIONAL PROTEIN PYRR"/>
    <property type="match status" value="1"/>
</dbReference>
<dbReference type="PANTHER" id="PTHR11608:SF0">
    <property type="entry name" value="BIFUNCTIONAL PROTEIN PYRR"/>
    <property type="match status" value="1"/>
</dbReference>
<dbReference type="Pfam" id="PF00156">
    <property type="entry name" value="Pribosyltran"/>
    <property type="match status" value="1"/>
</dbReference>
<dbReference type="SUPFAM" id="SSF53271">
    <property type="entry name" value="PRTase-like"/>
    <property type="match status" value="1"/>
</dbReference>
<accession>Q6GA15</accession>
<gene>
    <name evidence="2" type="primary">pyrR</name>
    <name type="ordered locus">SAS1132</name>
</gene>
<protein>
    <recommendedName>
        <fullName evidence="2">Bifunctional protein PyrR</fullName>
    </recommendedName>
    <domain>
        <recommendedName>
            <fullName evidence="2">Pyrimidine operon regulatory protein</fullName>
        </recommendedName>
    </domain>
    <domain>
        <recommendedName>
            <fullName evidence="2">Uracil phosphoribosyltransferase</fullName>
            <shortName evidence="2">UPRTase</shortName>
            <ecNumber evidence="2">2.4.2.9</ecNumber>
        </recommendedName>
    </domain>
</protein>
<keyword id="KW-0328">Glycosyltransferase</keyword>
<keyword id="KW-0694">RNA-binding</keyword>
<keyword id="KW-0804">Transcription</keyword>
<keyword id="KW-0805">Transcription regulation</keyword>
<keyword id="KW-0806">Transcription termination</keyword>
<keyword id="KW-0808">Transferase</keyword>
<comment type="function">
    <text evidence="2">Regulates transcriptional attenuation of the pyrimidine nucleotide (pyr) operon by binding in a uridine-dependent manner to specific sites on pyr mRNA. This disrupts an antiterminator hairpin in the RNA and favors formation of a downstream transcription terminator, leading to a reduced expression of downstream genes.</text>
</comment>
<comment type="function">
    <text evidence="2">Also displays a weak uracil phosphoribosyltransferase activity which is not physiologically significant.</text>
</comment>
<comment type="catalytic activity">
    <reaction evidence="2">
        <text>UMP + diphosphate = 5-phospho-alpha-D-ribose 1-diphosphate + uracil</text>
        <dbReference type="Rhea" id="RHEA:13017"/>
        <dbReference type="ChEBI" id="CHEBI:17568"/>
        <dbReference type="ChEBI" id="CHEBI:33019"/>
        <dbReference type="ChEBI" id="CHEBI:57865"/>
        <dbReference type="ChEBI" id="CHEBI:58017"/>
        <dbReference type="EC" id="2.4.2.9"/>
    </reaction>
</comment>
<comment type="subunit">
    <text evidence="2">Homodimer and homohexamer; in equilibrium.</text>
</comment>
<comment type="similarity">
    <text evidence="2">Belongs to the purine/pyrimidine phosphoribosyltransferase family. PyrR subfamily.</text>
</comment>
<evidence type="ECO:0000250" key="1"/>
<evidence type="ECO:0000255" key="2">
    <source>
        <dbReference type="HAMAP-Rule" id="MF_01219"/>
    </source>
</evidence>
<organism>
    <name type="scientific">Staphylococcus aureus (strain MSSA476)</name>
    <dbReference type="NCBI Taxonomy" id="282459"/>
    <lineage>
        <taxon>Bacteria</taxon>
        <taxon>Bacillati</taxon>
        <taxon>Bacillota</taxon>
        <taxon>Bacilli</taxon>
        <taxon>Bacillales</taxon>
        <taxon>Staphylococcaceae</taxon>
        <taxon>Staphylococcus</taxon>
    </lineage>
</organism>